<protein>
    <recommendedName>
        <fullName>Cytochrome c6</fullName>
    </recommendedName>
    <alternativeName>
        <fullName>Cytochrome c-553</fullName>
    </alternativeName>
    <alternativeName>
        <fullName>Cytochrome c553</fullName>
    </alternativeName>
    <alternativeName>
        <fullName>Soluble cytochrome f</fullName>
    </alternativeName>
</protein>
<reference key="1">
    <citation type="submission" date="2000-03" db="EMBL/GenBank/DDBJ databases">
        <title>Red alga, Porphyra yezoensis cytochrome c6.</title>
        <authorList>
            <person name="Oku T."/>
        </authorList>
    </citation>
    <scope>NUCLEOTIDE SEQUENCE [MRNA]</scope>
</reference>
<reference key="2">
    <citation type="submission" date="2003-11" db="EMBL/GenBank/DDBJ databases">
        <title>Whole genome sequence of Porphyra yezoensis chloroplast.</title>
        <authorList>
            <person name="Kunimoto M."/>
            <person name="Morishima K."/>
            <person name="Yoshikawa M."/>
            <person name="Fukuda S."/>
            <person name="Kobayashi T."/>
            <person name="Kobayashi M."/>
            <person name="Okazaki T."/>
            <person name="Ohara I."/>
            <person name="Nakayama I."/>
        </authorList>
    </citation>
    <scope>NUCLEOTIDE SEQUENCE [LARGE SCALE GENOMIC DNA]</scope>
    <source>
        <strain>U-51</strain>
    </source>
</reference>
<name>CYC6_PYRYE</name>
<proteinExistence type="evidence at protein level"/>
<keyword id="KW-0002">3D-structure</keyword>
<keyword id="KW-0150">Chloroplast</keyword>
<keyword id="KW-0249">Electron transport</keyword>
<keyword id="KW-0349">Heme</keyword>
<keyword id="KW-0408">Iron</keyword>
<keyword id="KW-0479">Metal-binding</keyword>
<keyword id="KW-0602">Photosynthesis</keyword>
<keyword id="KW-0934">Plastid</keyword>
<keyword id="KW-0732">Signal</keyword>
<keyword id="KW-0793">Thylakoid</keyword>
<keyword id="KW-0813">Transport</keyword>
<feature type="signal peptide" evidence="1">
    <location>
        <begin position="1"/>
        <end position="25"/>
    </location>
</feature>
<feature type="chain" id="PRO_0000023853" description="Cytochrome c6">
    <location>
        <begin position="26"/>
        <end position="110"/>
    </location>
</feature>
<feature type="binding site" description="covalent" evidence="1">
    <location>
        <position position="39"/>
    </location>
    <ligand>
        <name>heme c</name>
        <dbReference type="ChEBI" id="CHEBI:61717"/>
    </ligand>
</feature>
<feature type="binding site" description="covalent" evidence="1">
    <location>
        <position position="42"/>
    </location>
    <ligand>
        <name>heme c</name>
        <dbReference type="ChEBI" id="CHEBI:61717"/>
    </ligand>
</feature>
<feature type="binding site" description="axial binding residue" evidence="1">
    <location>
        <position position="43"/>
    </location>
    <ligand>
        <name>heme c</name>
        <dbReference type="ChEBI" id="CHEBI:61717"/>
    </ligand>
    <ligandPart>
        <name>Fe</name>
        <dbReference type="ChEBI" id="CHEBI:18248"/>
    </ligandPart>
</feature>
<feature type="binding site" description="axial binding residue" evidence="1">
    <location>
        <position position="83"/>
    </location>
    <ligand>
        <name>heme c</name>
        <dbReference type="ChEBI" id="CHEBI:61717"/>
    </ligand>
    <ligandPart>
        <name>Fe</name>
        <dbReference type="ChEBI" id="CHEBI:18248"/>
    </ligandPart>
</feature>
<feature type="helix" evidence="3">
    <location>
        <begin position="27"/>
        <end position="38"/>
    </location>
</feature>
<feature type="helix" evidence="3">
    <location>
        <begin position="40"/>
        <end position="43"/>
    </location>
</feature>
<feature type="helix" evidence="3">
    <location>
        <begin position="44"/>
        <end position="46"/>
    </location>
</feature>
<feature type="strand" evidence="3">
    <location>
        <begin position="49"/>
        <end position="51"/>
    </location>
</feature>
<feature type="helix" evidence="3">
    <location>
        <begin position="58"/>
        <end position="63"/>
    </location>
</feature>
<feature type="helix" evidence="3">
    <location>
        <begin position="69"/>
        <end position="78"/>
    </location>
</feature>
<feature type="turn" evidence="3">
    <location>
        <begin position="87"/>
        <end position="89"/>
    </location>
</feature>
<feature type="helix" evidence="3">
    <location>
        <begin position="92"/>
        <end position="108"/>
    </location>
</feature>
<organism>
    <name type="scientific">Pyropia yezoensis</name>
    <name type="common">Susabi-nori</name>
    <name type="synonym">Porphyra yezoensis</name>
    <dbReference type="NCBI Taxonomy" id="2788"/>
    <lineage>
        <taxon>Eukaryota</taxon>
        <taxon>Rhodophyta</taxon>
        <taxon>Bangiophyceae</taxon>
        <taxon>Bangiales</taxon>
        <taxon>Bangiaceae</taxon>
        <taxon>Pyropia</taxon>
    </lineage>
</organism>
<geneLocation type="chloroplast"/>
<accession>Q8WKJ8</accession>
<accession>Q1XDT7</accession>
<gene>
    <name type="primary">petJ</name>
</gene>
<dbReference type="EMBL" id="AB040818">
    <property type="protein sequence ID" value="BAB82501.1"/>
    <property type="molecule type" value="mRNA"/>
</dbReference>
<dbReference type="EMBL" id="AP006715">
    <property type="protein sequence ID" value="BAE92324.1"/>
    <property type="molecule type" value="Genomic_DNA"/>
</dbReference>
<dbReference type="RefSeq" id="YP_536881.1">
    <property type="nucleotide sequence ID" value="NC_007932.1"/>
</dbReference>
<dbReference type="PDB" id="1GDV">
    <property type="method" value="X-ray"/>
    <property type="resolution" value="1.57 A"/>
    <property type="chains" value="A=26-110"/>
</dbReference>
<dbReference type="PDBsum" id="1GDV"/>
<dbReference type="SMR" id="Q8WKJ8"/>
<dbReference type="GeneID" id="3978943"/>
<dbReference type="EvolutionaryTrace" id="Q8WKJ8"/>
<dbReference type="GO" id="GO:0009543">
    <property type="term" value="C:chloroplast thylakoid lumen"/>
    <property type="evidence" value="ECO:0007669"/>
    <property type="project" value="UniProtKB-SubCell"/>
</dbReference>
<dbReference type="GO" id="GO:0009055">
    <property type="term" value="F:electron transfer activity"/>
    <property type="evidence" value="ECO:0007669"/>
    <property type="project" value="UniProtKB-UniRule"/>
</dbReference>
<dbReference type="GO" id="GO:0020037">
    <property type="term" value="F:heme binding"/>
    <property type="evidence" value="ECO:0007669"/>
    <property type="project" value="InterPro"/>
</dbReference>
<dbReference type="GO" id="GO:0005506">
    <property type="term" value="F:iron ion binding"/>
    <property type="evidence" value="ECO:0007669"/>
    <property type="project" value="InterPro"/>
</dbReference>
<dbReference type="GO" id="GO:0015979">
    <property type="term" value="P:photosynthesis"/>
    <property type="evidence" value="ECO:0007669"/>
    <property type="project" value="UniProtKB-UniRule"/>
</dbReference>
<dbReference type="FunFam" id="1.10.760.10:FF:000038">
    <property type="entry name" value="Cytochrome c6"/>
    <property type="match status" value="1"/>
</dbReference>
<dbReference type="Gene3D" id="1.10.760.10">
    <property type="entry name" value="Cytochrome c-like domain"/>
    <property type="match status" value="1"/>
</dbReference>
<dbReference type="HAMAP" id="MF_00594">
    <property type="entry name" value="Cytc_PetJ"/>
    <property type="match status" value="1"/>
</dbReference>
<dbReference type="InterPro" id="IPR009056">
    <property type="entry name" value="Cyt_c-like_dom"/>
</dbReference>
<dbReference type="InterPro" id="IPR036909">
    <property type="entry name" value="Cyt_c-like_dom_sf"/>
</dbReference>
<dbReference type="InterPro" id="IPR023655">
    <property type="entry name" value="Cyt_C6"/>
</dbReference>
<dbReference type="InterPro" id="IPR008168">
    <property type="entry name" value="Cyt_C_IC"/>
</dbReference>
<dbReference type="NCBIfam" id="NF045930">
    <property type="entry name" value="Cytc6PetJCyano"/>
    <property type="match status" value="1"/>
</dbReference>
<dbReference type="PANTHER" id="PTHR34688">
    <property type="entry name" value="CYTOCHROME C6, CHLOROPLASTIC"/>
    <property type="match status" value="1"/>
</dbReference>
<dbReference type="PANTHER" id="PTHR34688:SF2">
    <property type="entry name" value="CYTOCHROME C6, CHLOROPLASTIC"/>
    <property type="match status" value="1"/>
</dbReference>
<dbReference type="Pfam" id="PF13442">
    <property type="entry name" value="Cytochrome_CBB3"/>
    <property type="match status" value="1"/>
</dbReference>
<dbReference type="PRINTS" id="PR00605">
    <property type="entry name" value="CYTCHROMECIC"/>
</dbReference>
<dbReference type="SUPFAM" id="SSF46626">
    <property type="entry name" value="Cytochrome c"/>
    <property type="match status" value="1"/>
</dbReference>
<dbReference type="PROSITE" id="PS51007">
    <property type="entry name" value="CYTC"/>
    <property type="match status" value="1"/>
</dbReference>
<comment type="function">
    <text evidence="1">Functions as an electron carrier between membrane-bound cytochrome b6-f and photosystem I in oxygenic photosynthesis.</text>
</comment>
<comment type="subunit">
    <text evidence="1">Monomer.</text>
</comment>
<comment type="subcellular location">
    <subcellularLocation>
        <location evidence="1">Plastid</location>
        <location evidence="1">Chloroplast thylakoid lumen</location>
    </subcellularLocation>
</comment>
<comment type="PTM">
    <text evidence="1">Binds 1 heme c group covalently per subunit.</text>
</comment>
<comment type="similarity">
    <text evidence="2">Belongs to the cytochrome c family. PetJ subfamily.</text>
</comment>
<sequence length="110" mass="11900">MKKKLSVLFTVFSFFVIGFAQIAFAADLDNGEKVFSANCAACHAGGNNAIMPDKTLKKDVLEANSMNTIDAITYQVQNGKNAMPAFGGRLVDEDIEDAANYVLSQSEKGW</sequence>
<evidence type="ECO:0000250" key="1"/>
<evidence type="ECO:0000305" key="2"/>
<evidence type="ECO:0007829" key="3">
    <source>
        <dbReference type="PDB" id="1GDV"/>
    </source>
</evidence>